<comment type="function">
    <text evidence="1">Divalent metal cation transporter which exports Zn(2+), Cd(2+) and possibly Fe(2+). May be involved in zinc and iron detoxification by efflux.</text>
</comment>
<comment type="catalytic activity">
    <reaction evidence="1">
        <text>Zn(2+)(in) + H(+)(out) = Zn(2+)(out) + H(+)(in)</text>
        <dbReference type="Rhea" id="RHEA:28839"/>
        <dbReference type="ChEBI" id="CHEBI:15378"/>
        <dbReference type="ChEBI" id="CHEBI:29105"/>
    </reaction>
</comment>
<comment type="catalytic activity">
    <reaction evidence="1">
        <text>Cd(2+)(in) + H(+)(out) = Cd(2+)(out) + H(+)(in)</text>
        <dbReference type="Rhea" id="RHEA:28739"/>
        <dbReference type="ChEBI" id="CHEBI:15378"/>
        <dbReference type="ChEBI" id="CHEBI:48775"/>
    </reaction>
</comment>
<comment type="catalytic activity">
    <reaction evidence="1">
        <text>Fe(2+)(in) + H(+)(out) = Fe(2+)(out) + H(+)(in)</text>
        <dbReference type="Rhea" id="RHEA:29439"/>
        <dbReference type="ChEBI" id="CHEBI:15378"/>
        <dbReference type="ChEBI" id="CHEBI:29033"/>
    </reaction>
</comment>
<comment type="subunit">
    <text evidence="1">Homodimer.</text>
</comment>
<comment type="subcellular location">
    <subcellularLocation>
        <location evidence="1">Cell inner membrane</location>
        <topology evidence="1">Multi-pass membrane protein</topology>
    </subcellularLocation>
</comment>
<comment type="similarity">
    <text evidence="1">Belongs to the cation diffusion facilitator (CDF) transporter (TC 2.A.4) family. FieF subfamily.</text>
</comment>
<evidence type="ECO:0000255" key="1">
    <source>
        <dbReference type="HAMAP-Rule" id="MF_01425"/>
    </source>
</evidence>
<dbReference type="EMBL" id="CU928161">
    <property type="protein sequence ID" value="CAR05545.1"/>
    <property type="molecule type" value="Genomic_DNA"/>
</dbReference>
<dbReference type="RefSeq" id="WP_001076748.1">
    <property type="nucleotide sequence ID" value="NC_011742.1"/>
</dbReference>
<dbReference type="SMR" id="B7MI47"/>
<dbReference type="GeneID" id="93777983"/>
<dbReference type="KEGG" id="ecz:ECS88_4365"/>
<dbReference type="HOGENOM" id="CLU_013430_3_0_6"/>
<dbReference type="Proteomes" id="UP000000747">
    <property type="component" value="Chromosome"/>
</dbReference>
<dbReference type="GO" id="GO:0005886">
    <property type="term" value="C:plasma membrane"/>
    <property type="evidence" value="ECO:0007669"/>
    <property type="project" value="UniProtKB-SubCell"/>
</dbReference>
<dbReference type="GO" id="GO:0015086">
    <property type="term" value="F:cadmium ion transmembrane transporter activity"/>
    <property type="evidence" value="ECO:0007669"/>
    <property type="project" value="UniProtKB-UniRule"/>
</dbReference>
<dbReference type="GO" id="GO:0015093">
    <property type="term" value="F:ferrous iron transmembrane transporter activity"/>
    <property type="evidence" value="ECO:0007669"/>
    <property type="project" value="TreeGrafter"/>
</dbReference>
<dbReference type="GO" id="GO:0046872">
    <property type="term" value="F:metal ion binding"/>
    <property type="evidence" value="ECO:0007669"/>
    <property type="project" value="UniProtKB-KW"/>
</dbReference>
<dbReference type="GO" id="GO:0015341">
    <property type="term" value="F:zinc efflux antiporter activity"/>
    <property type="evidence" value="ECO:0007669"/>
    <property type="project" value="TreeGrafter"/>
</dbReference>
<dbReference type="GO" id="GO:0006882">
    <property type="term" value="P:intracellular zinc ion homeostasis"/>
    <property type="evidence" value="ECO:0007669"/>
    <property type="project" value="TreeGrafter"/>
</dbReference>
<dbReference type="FunFam" id="1.20.1510.10:FF:000001">
    <property type="entry name" value="Ferrous-iron efflux pump FieF"/>
    <property type="match status" value="1"/>
</dbReference>
<dbReference type="FunFam" id="3.30.70.1350:FF:000002">
    <property type="entry name" value="Ferrous-iron efflux pump FieF"/>
    <property type="match status" value="1"/>
</dbReference>
<dbReference type="Gene3D" id="1.20.1510.10">
    <property type="entry name" value="Cation efflux protein transmembrane domain"/>
    <property type="match status" value="1"/>
</dbReference>
<dbReference type="Gene3D" id="3.30.70.1350">
    <property type="entry name" value="Cation efflux protein, cytoplasmic domain"/>
    <property type="match status" value="1"/>
</dbReference>
<dbReference type="HAMAP" id="MF_01425">
    <property type="entry name" value="Cation_efflux_FieF"/>
    <property type="match status" value="1"/>
</dbReference>
<dbReference type="InterPro" id="IPR002524">
    <property type="entry name" value="Cation_efflux"/>
</dbReference>
<dbReference type="InterPro" id="IPR027470">
    <property type="entry name" value="Cation_efflux_CTD"/>
</dbReference>
<dbReference type="InterPro" id="IPR036837">
    <property type="entry name" value="Cation_efflux_CTD_sf"/>
</dbReference>
<dbReference type="InterPro" id="IPR023783">
    <property type="entry name" value="Cation_efflux_FieF"/>
</dbReference>
<dbReference type="InterPro" id="IPR027469">
    <property type="entry name" value="Cation_efflux_TMD_sf"/>
</dbReference>
<dbReference type="InterPro" id="IPR050291">
    <property type="entry name" value="CDF_Transporter"/>
</dbReference>
<dbReference type="NCBIfam" id="TIGR01297">
    <property type="entry name" value="CDF"/>
    <property type="match status" value="1"/>
</dbReference>
<dbReference type="NCBIfam" id="NF007064">
    <property type="entry name" value="PRK09509.1"/>
    <property type="match status" value="1"/>
</dbReference>
<dbReference type="PANTHER" id="PTHR43840:SF41">
    <property type="entry name" value="CATION-EFFLUX PUMP FIEF"/>
    <property type="match status" value="1"/>
</dbReference>
<dbReference type="PANTHER" id="PTHR43840">
    <property type="entry name" value="MITOCHONDRIAL METAL TRANSPORTER 1-RELATED"/>
    <property type="match status" value="1"/>
</dbReference>
<dbReference type="Pfam" id="PF01545">
    <property type="entry name" value="Cation_efflux"/>
    <property type="match status" value="1"/>
</dbReference>
<dbReference type="Pfam" id="PF16916">
    <property type="entry name" value="ZT_dimer"/>
    <property type="match status" value="1"/>
</dbReference>
<dbReference type="SUPFAM" id="SSF160240">
    <property type="entry name" value="Cation efflux protein cytoplasmic domain-like"/>
    <property type="match status" value="1"/>
</dbReference>
<dbReference type="SUPFAM" id="SSF161111">
    <property type="entry name" value="Cation efflux protein transmembrane domain-like"/>
    <property type="match status" value="1"/>
</dbReference>
<name>FIEF_ECO45</name>
<gene>
    <name evidence="1" type="primary">fieF</name>
    <name type="ordered locus">ECS88_4365</name>
</gene>
<keyword id="KW-0997">Cell inner membrane</keyword>
<keyword id="KW-1003">Cell membrane</keyword>
<keyword id="KW-0406">Ion transport</keyword>
<keyword id="KW-0408">Iron</keyword>
<keyword id="KW-0410">Iron transport</keyword>
<keyword id="KW-0472">Membrane</keyword>
<keyword id="KW-0479">Metal-binding</keyword>
<keyword id="KW-1185">Reference proteome</keyword>
<keyword id="KW-0812">Transmembrane</keyword>
<keyword id="KW-1133">Transmembrane helix</keyword>
<keyword id="KW-0813">Transport</keyword>
<keyword id="KW-0862">Zinc</keyword>
<keyword id="KW-0864">Zinc transport</keyword>
<sequence length="300" mass="32913">MNQSYGRLVSRAAIAATAMASLLLLIKIFAWWYTGSVSILAALVDSLVDIGASLTNLLVVRYSLQPADDNHSFGHGKAESLAALAQSMFISGSALFLFLTGIQHLVSPTPMTDPGVGVIVTIVALICTIILVSFQRWVVRRTQSQAVRADMLHYQSDVMMNGAILLALGLSWYGWHRADALFALGIGIYILYSALRMGYEAVQSLLDRALPDEERQEIIDIVTSWPGVSGAHDLRTRQSGPTRFIQIHLEMEDSLPLVQAHMVADQVEQAILRRFPGSDVIIHQDPCSVVPREGKRSMLS</sequence>
<protein>
    <recommendedName>
        <fullName evidence="1">Cation-efflux pump FieF</fullName>
    </recommendedName>
</protein>
<organism>
    <name type="scientific">Escherichia coli O45:K1 (strain S88 / ExPEC)</name>
    <dbReference type="NCBI Taxonomy" id="585035"/>
    <lineage>
        <taxon>Bacteria</taxon>
        <taxon>Pseudomonadati</taxon>
        <taxon>Pseudomonadota</taxon>
        <taxon>Gammaproteobacteria</taxon>
        <taxon>Enterobacterales</taxon>
        <taxon>Enterobacteriaceae</taxon>
        <taxon>Escherichia</taxon>
    </lineage>
</organism>
<feature type="chain" id="PRO_1000145689" description="Cation-efflux pump FieF">
    <location>
        <begin position="1"/>
        <end position="300"/>
    </location>
</feature>
<feature type="transmembrane region" description="Helical" evidence="1">
    <location>
        <begin position="12"/>
        <end position="32"/>
    </location>
</feature>
<feature type="transmembrane region" description="Helical" evidence="1">
    <location>
        <begin position="39"/>
        <end position="59"/>
    </location>
</feature>
<feature type="transmembrane region" description="Helical" evidence="1">
    <location>
        <begin position="82"/>
        <end position="102"/>
    </location>
</feature>
<feature type="transmembrane region" description="Helical" evidence="1">
    <location>
        <begin position="114"/>
        <end position="134"/>
    </location>
</feature>
<feature type="transmembrane region" description="Helical" evidence="1">
    <location>
        <begin position="156"/>
        <end position="176"/>
    </location>
</feature>
<feature type="transmembrane region" description="Helical" evidence="1">
    <location>
        <begin position="178"/>
        <end position="198"/>
    </location>
</feature>
<feature type="binding site" evidence="1">
    <location>
        <position position="45"/>
    </location>
    <ligand>
        <name>Zn(2+)</name>
        <dbReference type="ChEBI" id="CHEBI:29105"/>
    </ligand>
</feature>
<feature type="binding site" evidence="1">
    <location>
        <position position="49"/>
    </location>
    <ligand>
        <name>Zn(2+)</name>
        <dbReference type="ChEBI" id="CHEBI:29105"/>
    </ligand>
</feature>
<feature type="binding site" evidence="1">
    <location>
        <position position="153"/>
    </location>
    <ligand>
        <name>Zn(2+)</name>
        <dbReference type="ChEBI" id="CHEBI:29105"/>
    </ligand>
</feature>
<feature type="binding site" evidence="1">
    <location>
        <position position="157"/>
    </location>
    <ligand>
        <name>Zn(2+)</name>
        <dbReference type="ChEBI" id="CHEBI:29105"/>
    </ligand>
</feature>
<proteinExistence type="inferred from homology"/>
<accession>B7MI47</accession>
<reference key="1">
    <citation type="journal article" date="2009" name="PLoS Genet.">
        <title>Organised genome dynamics in the Escherichia coli species results in highly diverse adaptive paths.</title>
        <authorList>
            <person name="Touchon M."/>
            <person name="Hoede C."/>
            <person name="Tenaillon O."/>
            <person name="Barbe V."/>
            <person name="Baeriswyl S."/>
            <person name="Bidet P."/>
            <person name="Bingen E."/>
            <person name="Bonacorsi S."/>
            <person name="Bouchier C."/>
            <person name="Bouvet O."/>
            <person name="Calteau A."/>
            <person name="Chiapello H."/>
            <person name="Clermont O."/>
            <person name="Cruveiller S."/>
            <person name="Danchin A."/>
            <person name="Diard M."/>
            <person name="Dossat C."/>
            <person name="Karoui M.E."/>
            <person name="Frapy E."/>
            <person name="Garry L."/>
            <person name="Ghigo J.M."/>
            <person name="Gilles A.M."/>
            <person name="Johnson J."/>
            <person name="Le Bouguenec C."/>
            <person name="Lescat M."/>
            <person name="Mangenot S."/>
            <person name="Martinez-Jehanne V."/>
            <person name="Matic I."/>
            <person name="Nassif X."/>
            <person name="Oztas S."/>
            <person name="Petit M.A."/>
            <person name="Pichon C."/>
            <person name="Rouy Z."/>
            <person name="Ruf C.S."/>
            <person name="Schneider D."/>
            <person name="Tourret J."/>
            <person name="Vacherie B."/>
            <person name="Vallenet D."/>
            <person name="Medigue C."/>
            <person name="Rocha E.P.C."/>
            <person name="Denamur E."/>
        </authorList>
    </citation>
    <scope>NUCLEOTIDE SEQUENCE [LARGE SCALE GENOMIC DNA]</scope>
    <source>
        <strain>S88 / ExPEC</strain>
    </source>
</reference>